<evidence type="ECO:0000255" key="1">
    <source>
        <dbReference type="HAMAP-Rule" id="MF_00435"/>
    </source>
</evidence>
<evidence type="ECO:0000255" key="2">
    <source>
        <dbReference type="PROSITE-ProRule" id="PRU01197"/>
    </source>
</evidence>
<evidence type="ECO:0000255" key="3">
    <source>
        <dbReference type="PROSITE-ProRule" id="PRU01198"/>
    </source>
</evidence>
<organism>
    <name type="scientific">Acidobacterium capsulatum (strain ATCC 51196 / DSM 11244 / BCRC 80197 / JCM 7670 / NBRC 15755 / NCIMB 13165 / 161)</name>
    <dbReference type="NCBI Taxonomy" id="240015"/>
    <lineage>
        <taxon>Bacteria</taxon>
        <taxon>Pseudomonadati</taxon>
        <taxon>Acidobacteriota</taxon>
        <taxon>Terriglobia</taxon>
        <taxon>Terriglobales</taxon>
        <taxon>Acidobacteriaceae</taxon>
        <taxon>Acidobacterium</taxon>
    </lineage>
</organism>
<dbReference type="EC" id="1.1.1.86" evidence="1"/>
<dbReference type="EMBL" id="CP001472">
    <property type="protein sequence ID" value="ACO32011.1"/>
    <property type="molecule type" value="Genomic_DNA"/>
</dbReference>
<dbReference type="RefSeq" id="WP_015898493.1">
    <property type="nucleotide sequence ID" value="NC_012483.1"/>
</dbReference>
<dbReference type="SMR" id="C1F6Z5"/>
<dbReference type="FunCoup" id="C1F6Z5">
    <property type="interactions" value="501"/>
</dbReference>
<dbReference type="STRING" id="240015.ACP_3464"/>
<dbReference type="KEGG" id="aca:ACP_3464"/>
<dbReference type="eggNOG" id="COG0059">
    <property type="taxonomic scope" value="Bacteria"/>
</dbReference>
<dbReference type="HOGENOM" id="CLU_033821_0_1_0"/>
<dbReference type="InParanoid" id="C1F6Z5"/>
<dbReference type="OrthoDB" id="9804088at2"/>
<dbReference type="UniPathway" id="UPA00047">
    <property type="reaction ID" value="UER00056"/>
</dbReference>
<dbReference type="UniPathway" id="UPA00049">
    <property type="reaction ID" value="UER00060"/>
</dbReference>
<dbReference type="Proteomes" id="UP000002207">
    <property type="component" value="Chromosome"/>
</dbReference>
<dbReference type="GO" id="GO:0005829">
    <property type="term" value="C:cytosol"/>
    <property type="evidence" value="ECO:0007669"/>
    <property type="project" value="TreeGrafter"/>
</dbReference>
<dbReference type="GO" id="GO:0004455">
    <property type="term" value="F:ketol-acid reductoisomerase activity"/>
    <property type="evidence" value="ECO:0007669"/>
    <property type="project" value="UniProtKB-UniRule"/>
</dbReference>
<dbReference type="GO" id="GO:0000287">
    <property type="term" value="F:magnesium ion binding"/>
    <property type="evidence" value="ECO:0007669"/>
    <property type="project" value="UniProtKB-UniRule"/>
</dbReference>
<dbReference type="GO" id="GO:0050661">
    <property type="term" value="F:NADP binding"/>
    <property type="evidence" value="ECO:0007669"/>
    <property type="project" value="InterPro"/>
</dbReference>
<dbReference type="GO" id="GO:0009097">
    <property type="term" value="P:isoleucine biosynthetic process"/>
    <property type="evidence" value="ECO:0007669"/>
    <property type="project" value="UniProtKB-UniRule"/>
</dbReference>
<dbReference type="GO" id="GO:0009099">
    <property type="term" value="P:L-valine biosynthetic process"/>
    <property type="evidence" value="ECO:0007669"/>
    <property type="project" value="UniProtKB-UniRule"/>
</dbReference>
<dbReference type="FunFam" id="3.40.50.720:FF:000023">
    <property type="entry name" value="Ketol-acid reductoisomerase (NADP(+))"/>
    <property type="match status" value="1"/>
</dbReference>
<dbReference type="Gene3D" id="6.10.240.10">
    <property type="match status" value="1"/>
</dbReference>
<dbReference type="Gene3D" id="3.40.50.720">
    <property type="entry name" value="NAD(P)-binding Rossmann-like Domain"/>
    <property type="match status" value="1"/>
</dbReference>
<dbReference type="HAMAP" id="MF_00435">
    <property type="entry name" value="IlvC"/>
    <property type="match status" value="1"/>
</dbReference>
<dbReference type="InterPro" id="IPR008927">
    <property type="entry name" value="6-PGluconate_DH-like_C_sf"/>
</dbReference>
<dbReference type="InterPro" id="IPR013023">
    <property type="entry name" value="KARI"/>
</dbReference>
<dbReference type="InterPro" id="IPR000506">
    <property type="entry name" value="KARI_C"/>
</dbReference>
<dbReference type="InterPro" id="IPR013116">
    <property type="entry name" value="KARI_N"/>
</dbReference>
<dbReference type="InterPro" id="IPR014359">
    <property type="entry name" value="KARI_prok"/>
</dbReference>
<dbReference type="InterPro" id="IPR036291">
    <property type="entry name" value="NAD(P)-bd_dom_sf"/>
</dbReference>
<dbReference type="NCBIfam" id="TIGR00465">
    <property type="entry name" value="ilvC"/>
    <property type="match status" value="1"/>
</dbReference>
<dbReference type="NCBIfam" id="NF004017">
    <property type="entry name" value="PRK05479.1"/>
    <property type="match status" value="1"/>
</dbReference>
<dbReference type="NCBIfam" id="NF009940">
    <property type="entry name" value="PRK13403.1"/>
    <property type="match status" value="1"/>
</dbReference>
<dbReference type="PANTHER" id="PTHR21371">
    <property type="entry name" value="KETOL-ACID REDUCTOISOMERASE, MITOCHONDRIAL"/>
    <property type="match status" value="1"/>
</dbReference>
<dbReference type="PANTHER" id="PTHR21371:SF1">
    <property type="entry name" value="KETOL-ACID REDUCTOISOMERASE, MITOCHONDRIAL"/>
    <property type="match status" value="1"/>
</dbReference>
<dbReference type="Pfam" id="PF01450">
    <property type="entry name" value="KARI_C"/>
    <property type="match status" value="1"/>
</dbReference>
<dbReference type="Pfam" id="PF07991">
    <property type="entry name" value="KARI_N"/>
    <property type="match status" value="1"/>
</dbReference>
<dbReference type="PIRSF" id="PIRSF000116">
    <property type="entry name" value="IlvC_gammaproteo"/>
    <property type="match status" value="1"/>
</dbReference>
<dbReference type="SUPFAM" id="SSF48179">
    <property type="entry name" value="6-phosphogluconate dehydrogenase C-terminal domain-like"/>
    <property type="match status" value="1"/>
</dbReference>
<dbReference type="SUPFAM" id="SSF51735">
    <property type="entry name" value="NAD(P)-binding Rossmann-fold domains"/>
    <property type="match status" value="1"/>
</dbReference>
<dbReference type="PROSITE" id="PS51851">
    <property type="entry name" value="KARI_C"/>
    <property type="match status" value="1"/>
</dbReference>
<dbReference type="PROSITE" id="PS51850">
    <property type="entry name" value="KARI_N"/>
    <property type="match status" value="1"/>
</dbReference>
<keyword id="KW-0028">Amino-acid biosynthesis</keyword>
<keyword id="KW-0100">Branched-chain amino acid biosynthesis</keyword>
<keyword id="KW-0460">Magnesium</keyword>
<keyword id="KW-0479">Metal-binding</keyword>
<keyword id="KW-0521">NADP</keyword>
<keyword id="KW-0560">Oxidoreductase</keyword>
<keyword id="KW-1185">Reference proteome</keyword>
<sequence length="348" mass="37407">MAKTYYDHDADLALIQQKKVAIIGYGSQGHAHALGLKDSGVEVRVGLAPNSRSIEKAKKAGLETGTVAEVAAWADVIMILAPDTAQAAIYEESIAPHLKAGKTLMFAHGFNIRYDAIQPPKDVDVSLVAPKAPGHRVREVFVEGGGTPGLVAVHQDASGQALALALAYAKAIGCTRAGVLETTFKEETETDLFGEQAVLCGGTAALVKAGFETLVNAGYQPEVAYFECLHELKLIVDLMYRGGLAYMRYSISDTAEWGDYVAGPRIVTDETRAAMKKLLTDIQDGTFAKRWIEENKTGRKELDAIRAQEAKHPIETVGEKLRAAMPFLDPVTVKDGYPQPAGAKPKEA</sequence>
<protein>
    <recommendedName>
        <fullName evidence="1">Ketol-acid reductoisomerase (NADP(+))</fullName>
        <shortName evidence="1">KARI</shortName>
        <ecNumber evidence="1">1.1.1.86</ecNumber>
    </recommendedName>
    <alternativeName>
        <fullName evidence="1">Acetohydroxy-acid isomeroreductase</fullName>
        <shortName evidence="1">AHIR</shortName>
    </alternativeName>
    <alternativeName>
        <fullName evidence="1">Alpha-keto-beta-hydroxylacyl reductoisomerase</fullName>
    </alternativeName>
    <alternativeName>
        <fullName evidence="1">Ketol-acid reductoisomerase type 1</fullName>
    </alternativeName>
    <alternativeName>
        <fullName evidence="1">Ketol-acid reductoisomerase type I</fullName>
    </alternativeName>
</protein>
<proteinExistence type="inferred from homology"/>
<accession>C1F6Z5</accession>
<comment type="function">
    <text evidence="1">Involved in the biosynthesis of branched-chain amino acids (BCAA). Catalyzes an alkyl-migration followed by a ketol-acid reduction of (S)-2-acetolactate (S2AL) to yield (R)-2,3-dihydroxy-isovalerate. In the isomerase reaction, S2AL is rearranged via a Mg-dependent methyl migration to produce 3-hydroxy-3-methyl-2-ketobutyrate (HMKB). In the reductase reaction, this 2-ketoacid undergoes a metal-dependent reduction by NADPH to yield (R)-2,3-dihydroxy-isovalerate.</text>
</comment>
<comment type="catalytic activity">
    <reaction evidence="1">
        <text>(2R)-2,3-dihydroxy-3-methylbutanoate + NADP(+) = (2S)-2-acetolactate + NADPH + H(+)</text>
        <dbReference type="Rhea" id="RHEA:22068"/>
        <dbReference type="ChEBI" id="CHEBI:15378"/>
        <dbReference type="ChEBI" id="CHEBI:49072"/>
        <dbReference type="ChEBI" id="CHEBI:57783"/>
        <dbReference type="ChEBI" id="CHEBI:58349"/>
        <dbReference type="ChEBI" id="CHEBI:58476"/>
        <dbReference type="EC" id="1.1.1.86"/>
    </reaction>
</comment>
<comment type="catalytic activity">
    <reaction evidence="1">
        <text>(2R,3R)-2,3-dihydroxy-3-methylpentanoate + NADP(+) = (S)-2-ethyl-2-hydroxy-3-oxobutanoate + NADPH + H(+)</text>
        <dbReference type="Rhea" id="RHEA:13493"/>
        <dbReference type="ChEBI" id="CHEBI:15378"/>
        <dbReference type="ChEBI" id="CHEBI:49256"/>
        <dbReference type="ChEBI" id="CHEBI:49258"/>
        <dbReference type="ChEBI" id="CHEBI:57783"/>
        <dbReference type="ChEBI" id="CHEBI:58349"/>
        <dbReference type="EC" id="1.1.1.86"/>
    </reaction>
</comment>
<comment type="cofactor">
    <cofactor evidence="1">
        <name>Mg(2+)</name>
        <dbReference type="ChEBI" id="CHEBI:18420"/>
    </cofactor>
    <text evidence="1">Binds 2 magnesium ions per subunit.</text>
</comment>
<comment type="pathway">
    <text evidence="1">Amino-acid biosynthesis; L-isoleucine biosynthesis; L-isoleucine from 2-oxobutanoate: step 2/4.</text>
</comment>
<comment type="pathway">
    <text evidence="1">Amino-acid biosynthesis; L-valine biosynthesis; L-valine from pyruvate: step 2/4.</text>
</comment>
<comment type="similarity">
    <text evidence="1">Belongs to the ketol-acid reductoisomerase family.</text>
</comment>
<gene>
    <name evidence="1" type="primary">ilvC</name>
    <name type="ordered locus">ACP_3464</name>
</gene>
<name>ILVC_ACIC5</name>
<feature type="chain" id="PRO_1000190898" description="Ketol-acid reductoisomerase (NADP(+))">
    <location>
        <begin position="1"/>
        <end position="348"/>
    </location>
</feature>
<feature type="domain" description="KARI N-terminal Rossmann" evidence="2">
    <location>
        <begin position="2"/>
        <end position="182"/>
    </location>
</feature>
<feature type="domain" description="KARI C-terminal knotted" evidence="3">
    <location>
        <begin position="183"/>
        <end position="328"/>
    </location>
</feature>
<feature type="active site" evidence="1">
    <location>
        <position position="108"/>
    </location>
</feature>
<feature type="binding site" evidence="1">
    <location>
        <begin position="25"/>
        <end position="28"/>
    </location>
    <ligand>
        <name>NADP(+)</name>
        <dbReference type="ChEBI" id="CHEBI:58349"/>
    </ligand>
</feature>
<feature type="binding site" evidence="1">
    <location>
        <position position="51"/>
    </location>
    <ligand>
        <name>NADP(+)</name>
        <dbReference type="ChEBI" id="CHEBI:58349"/>
    </ligand>
</feature>
<feature type="binding site" evidence="1">
    <location>
        <position position="53"/>
    </location>
    <ligand>
        <name>NADP(+)</name>
        <dbReference type="ChEBI" id="CHEBI:58349"/>
    </ligand>
</feature>
<feature type="binding site" evidence="1">
    <location>
        <begin position="83"/>
        <end position="86"/>
    </location>
    <ligand>
        <name>NADP(+)</name>
        <dbReference type="ChEBI" id="CHEBI:58349"/>
    </ligand>
</feature>
<feature type="binding site" evidence="1">
    <location>
        <position position="134"/>
    </location>
    <ligand>
        <name>NADP(+)</name>
        <dbReference type="ChEBI" id="CHEBI:58349"/>
    </ligand>
</feature>
<feature type="binding site" evidence="1">
    <location>
        <position position="191"/>
    </location>
    <ligand>
        <name>Mg(2+)</name>
        <dbReference type="ChEBI" id="CHEBI:18420"/>
        <label>1</label>
    </ligand>
</feature>
<feature type="binding site" evidence="1">
    <location>
        <position position="191"/>
    </location>
    <ligand>
        <name>Mg(2+)</name>
        <dbReference type="ChEBI" id="CHEBI:18420"/>
        <label>2</label>
    </ligand>
</feature>
<feature type="binding site" evidence="1">
    <location>
        <position position="195"/>
    </location>
    <ligand>
        <name>Mg(2+)</name>
        <dbReference type="ChEBI" id="CHEBI:18420"/>
        <label>1</label>
    </ligand>
</feature>
<feature type="binding site" evidence="1">
    <location>
        <position position="227"/>
    </location>
    <ligand>
        <name>Mg(2+)</name>
        <dbReference type="ChEBI" id="CHEBI:18420"/>
        <label>2</label>
    </ligand>
</feature>
<feature type="binding site" evidence="1">
    <location>
        <position position="231"/>
    </location>
    <ligand>
        <name>Mg(2+)</name>
        <dbReference type="ChEBI" id="CHEBI:18420"/>
        <label>2</label>
    </ligand>
</feature>
<feature type="binding site" evidence="1">
    <location>
        <position position="252"/>
    </location>
    <ligand>
        <name>substrate</name>
    </ligand>
</feature>
<reference key="1">
    <citation type="journal article" date="2009" name="Appl. Environ. Microbiol.">
        <title>Three genomes from the phylum Acidobacteria provide insight into the lifestyles of these microorganisms in soils.</title>
        <authorList>
            <person name="Ward N.L."/>
            <person name="Challacombe J.F."/>
            <person name="Janssen P.H."/>
            <person name="Henrissat B."/>
            <person name="Coutinho P.M."/>
            <person name="Wu M."/>
            <person name="Xie G."/>
            <person name="Haft D.H."/>
            <person name="Sait M."/>
            <person name="Badger J."/>
            <person name="Barabote R.D."/>
            <person name="Bradley B."/>
            <person name="Brettin T.S."/>
            <person name="Brinkac L.M."/>
            <person name="Bruce D."/>
            <person name="Creasy T."/>
            <person name="Daugherty S.C."/>
            <person name="Davidsen T.M."/>
            <person name="DeBoy R.T."/>
            <person name="Detter J.C."/>
            <person name="Dodson R.J."/>
            <person name="Durkin A.S."/>
            <person name="Ganapathy A."/>
            <person name="Gwinn-Giglio M."/>
            <person name="Han C.S."/>
            <person name="Khouri H."/>
            <person name="Kiss H."/>
            <person name="Kothari S.P."/>
            <person name="Madupu R."/>
            <person name="Nelson K.E."/>
            <person name="Nelson W.C."/>
            <person name="Paulsen I."/>
            <person name="Penn K."/>
            <person name="Ren Q."/>
            <person name="Rosovitz M.J."/>
            <person name="Selengut J.D."/>
            <person name="Shrivastava S."/>
            <person name="Sullivan S.A."/>
            <person name="Tapia R."/>
            <person name="Thompson L.S."/>
            <person name="Watkins K.L."/>
            <person name="Yang Q."/>
            <person name="Yu C."/>
            <person name="Zafar N."/>
            <person name="Zhou L."/>
            <person name="Kuske C.R."/>
        </authorList>
    </citation>
    <scope>NUCLEOTIDE SEQUENCE [LARGE SCALE GENOMIC DNA]</scope>
    <source>
        <strain>ATCC 51196 / DSM 11244 / BCRC 80197 / JCM 7670 / NBRC 15755 / NCIMB 13165 / 161</strain>
    </source>
</reference>